<proteinExistence type="evidence at protein level"/>
<gene>
    <name evidence="4" type="primary">pboA</name>
    <name type="ORF">HK57_00375</name>
</gene>
<organism>
    <name type="scientific">Aspergillus ustus</name>
    <dbReference type="NCBI Taxonomy" id="40382"/>
    <lineage>
        <taxon>Eukaryota</taxon>
        <taxon>Fungi</taxon>
        <taxon>Dikarya</taxon>
        <taxon>Ascomycota</taxon>
        <taxon>Pezizomycotina</taxon>
        <taxon>Eurotiomycetes</taxon>
        <taxon>Eurotiomycetidae</taxon>
        <taxon>Eurotiales</taxon>
        <taxon>Aspergillaceae</taxon>
        <taxon>Aspergillus</taxon>
        <taxon>Aspergillus subgen. Nidulantes</taxon>
    </lineage>
</organism>
<protein>
    <recommendedName>
        <fullName evidence="4">Nonribosomal peptide synthetase pboA</fullName>
        <shortName evidence="4">NRPS pboA</shortName>
        <ecNumber evidence="3">6.3.2.-</ecNumber>
    </recommendedName>
    <alternativeName>
        <fullName evidence="4">Protubonine biosynthesis cluster protein A</fullName>
    </alternativeName>
</protein>
<name>PBOA_ASPUT</name>
<accession>A0A0C1E6T8</accession>
<comment type="function">
    <text evidence="3">Nonribosomal peptide synthetase; part of the gene cluster that mediates the biosynthesis of protubonine B, a hydroxylated and diacetylated cyclo-L-Trp-L-Leu derivative (PubMed:37382166). The first step of the protubonine B synthesis is performed by the nonribosomal peptide synthetase pboA that catalyzes the formation of cyclo-L-Trp-L-Leu by condensing L-Leu with L-Trp (PubMed:37382166). The flavin-dependent monooxygenase pboD is responsible for hydroxylation at C-3 of the indole ring and subsequent formation of the pyrrolidine ring, leadind to protubonine D. Protubonine D is further diacetylated by two acetyltransferases, pboB and pboC, to form the final product protubonine B via protubonine C (PubMed:37382166).</text>
</comment>
<comment type="cofactor">
    <cofactor evidence="2">
        <name>pantetheine 4'-phosphate</name>
        <dbReference type="ChEBI" id="CHEBI:47942"/>
    </cofactor>
</comment>
<comment type="pathway">
    <text evidence="3">Secondary metabolite biosynthesis.</text>
</comment>
<comment type="domain">
    <text evidence="6">NRP synthetases are composed of discrete domains (adenylation (A), thiolation (T) or peptidyl carrier protein (PCP) and condensation (C) domains) which when grouped together are referred to as a single module. Each module is responsible for the recognition (via the A domain) and incorporation of a single amino acid into the growing peptide product. Thus, an NRP synthetase is generally composed of one or more modules and can terminate in a thioesterase domain (TE) that releases the newly synthesized peptide from the enzyme. Occasionally, epimerase (E) domains (responsible for L- to D-amino acid conversion) are present within the NRP synthetase. PboA has the following architecture: A-T-C-A-T-C.</text>
</comment>
<comment type="similarity">
    <text evidence="5">Belongs to the NRP synthetase family.</text>
</comment>
<evidence type="ECO:0000255" key="1"/>
<evidence type="ECO:0000255" key="2">
    <source>
        <dbReference type="PROSITE-ProRule" id="PRU00258"/>
    </source>
</evidence>
<evidence type="ECO:0000269" key="3">
    <source>
    </source>
</evidence>
<evidence type="ECO:0000303" key="4">
    <source>
    </source>
</evidence>
<evidence type="ECO:0000305" key="5"/>
<evidence type="ECO:0000305" key="6">
    <source>
    </source>
</evidence>
<dbReference type="EC" id="6.3.2.-" evidence="3"/>
<dbReference type="EMBL" id="JOMC01000033">
    <property type="protein sequence ID" value="KIA75848.1"/>
    <property type="molecule type" value="Genomic_DNA"/>
</dbReference>
<dbReference type="SMR" id="A0A0C1E6T8"/>
<dbReference type="Proteomes" id="UP000053475">
    <property type="component" value="Unassembled WGS sequence"/>
</dbReference>
<dbReference type="GO" id="GO:0005737">
    <property type="term" value="C:cytoplasm"/>
    <property type="evidence" value="ECO:0007669"/>
    <property type="project" value="TreeGrafter"/>
</dbReference>
<dbReference type="GO" id="GO:0016874">
    <property type="term" value="F:ligase activity"/>
    <property type="evidence" value="ECO:0007669"/>
    <property type="project" value="UniProtKB-KW"/>
</dbReference>
<dbReference type="GO" id="GO:0031177">
    <property type="term" value="F:phosphopantetheine binding"/>
    <property type="evidence" value="ECO:0007669"/>
    <property type="project" value="TreeGrafter"/>
</dbReference>
<dbReference type="GO" id="GO:0043041">
    <property type="term" value="P:amino acid activation for nonribosomal peptide biosynthetic process"/>
    <property type="evidence" value="ECO:0007669"/>
    <property type="project" value="TreeGrafter"/>
</dbReference>
<dbReference type="GO" id="GO:0044550">
    <property type="term" value="P:secondary metabolite biosynthetic process"/>
    <property type="evidence" value="ECO:0007669"/>
    <property type="project" value="TreeGrafter"/>
</dbReference>
<dbReference type="CDD" id="cd19537">
    <property type="entry name" value="C_NRPS-like"/>
    <property type="match status" value="1"/>
</dbReference>
<dbReference type="Gene3D" id="3.30.300.30">
    <property type="match status" value="2"/>
</dbReference>
<dbReference type="Gene3D" id="1.10.1200.10">
    <property type="entry name" value="ACP-like"/>
    <property type="match status" value="2"/>
</dbReference>
<dbReference type="Gene3D" id="3.30.559.10">
    <property type="entry name" value="Chloramphenicol acetyltransferase-like domain"/>
    <property type="match status" value="2"/>
</dbReference>
<dbReference type="Gene3D" id="3.40.50.12780">
    <property type="entry name" value="N-terminal domain of ligase-like"/>
    <property type="match status" value="2"/>
</dbReference>
<dbReference type="Gene3D" id="3.30.559.30">
    <property type="entry name" value="Nonribosomal peptide synthetase, condensation domain"/>
    <property type="match status" value="2"/>
</dbReference>
<dbReference type="InterPro" id="IPR036736">
    <property type="entry name" value="ACP-like_sf"/>
</dbReference>
<dbReference type="InterPro" id="IPR045851">
    <property type="entry name" value="AMP-bd_C_sf"/>
</dbReference>
<dbReference type="InterPro" id="IPR020845">
    <property type="entry name" value="AMP-binding_CS"/>
</dbReference>
<dbReference type="InterPro" id="IPR000873">
    <property type="entry name" value="AMP-dep_synth/lig_dom"/>
</dbReference>
<dbReference type="InterPro" id="IPR042099">
    <property type="entry name" value="ANL_N_sf"/>
</dbReference>
<dbReference type="InterPro" id="IPR023213">
    <property type="entry name" value="CAT-like_dom_sf"/>
</dbReference>
<dbReference type="InterPro" id="IPR001242">
    <property type="entry name" value="Condensatn"/>
</dbReference>
<dbReference type="InterPro" id="IPR009081">
    <property type="entry name" value="PP-bd_ACP"/>
</dbReference>
<dbReference type="PANTHER" id="PTHR45527">
    <property type="entry name" value="NONRIBOSOMAL PEPTIDE SYNTHETASE"/>
    <property type="match status" value="1"/>
</dbReference>
<dbReference type="PANTHER" id="PTHR45527:SF11">
    <property type="entry name" value="NONRIBOSOMAL PEPTIDE SYNTHETASE 5"/>
    <property type="match status" value="1"/>
</dbReference>
<dbReference type="Pfam" id="PF00501">
    <property type="entry name" value="AMP-binding"/>
    <property type="match status" value="2"/>
</dbReference>
<dbReference type="Pfam" id="PF00668">
    <property type="entry name" value="Condensation"/>
    <property type="match status" value="2"/>
</dbReference>
<dbReference type="Pfam" id="PF00550">
    <property type="entry name" value="PP-binding"/>
    <property type="match status" value="2"/>
</dbReference>
<dbReference type="SUPFAM" id="SSF56801">
    <property type="entry name" value="Acetyl-CoA synthetase-like"/>
    <property type="match status" value="2"/>
</dbReference>
<dbReference type="SUPFAM" id="SSF47336">
    <property type="entry name" value="ACP-like"/>
    <property type="match status" value="2"/>
</dbReference>
<dbReference type="SUPFAM" id="SSF52777">
    <property type="entry name" value="CoA-dependent acyltransferases"/>
    <property type="match status" value="4"/>
</dbReference>
<dbReference type="PROSITE" id="PS00455">
    <property type="entry name" value="AMP_BINDING"/>
    <property type="match status" value="1"/>
</dbReference>
<dbReference type="PROSITE" id="PS50075">
    <property type="entry name" value="CARRIER"/>
    <property type="match status" value="2"/>
</dbReference>
<sequence>MTTRGANPVLCLVGQACRDNADRPAVEDGYGNRLSYAQLDEKSTEVAQYLSGLGARPGEIIPLLTSSCPEMVIGVLGIIKAGCTYVPIDRVQWPQNRIDEVLKRCNPRIALYTGGEIQIENCETVRLPLCPRKVAPRHENSSSLGPEIMCIIFTSGTTNKPKAVQIRSTSVAALVSSPAFNYDVQPGDRVLLVLSVAFDACMATLFSTLCNGGTVMLANTHNFQQVGSRCNILVLTPSILESLRPPTLFSDYEDVQKIILGGETPSRALLKSWSVLQIPIWIAYGPTEATCAVLTECLERSATTGDYYPNRFGRVIPGGSLLLLDDDNKVVEELNNERELCIAGECLAAGYWKDEEKTRTHFVVHKGERVYRTGDIAKWVLSDQGSLVLELCGRRDRVAKVRGFLVNLDHDVDACLMQLDENVKAAFSLVIDGRLCTAIVCAGSINEKQLRVQWRKRSPPYMISDHICSFESLPLTPNGKIEPKGVARLLEAQLPTPVLNPKRSYASVDEVIVDKASSLLGLPAAEICLEASLVSQGLHSLAAAKLSAFCHQRGFEVPVEDILTQPSVAHLITVCRERRPQVSLPYCAVDAVPEENVIIPFHQKLILASLNDPSLYCVKHVSHHSTIDIPKLKAAWMSVVAAEPGLRTVFKVQDTIITRHVGLPKDVRWMETVVGSHEDIQREIALLDQDTGLGSQFRVLNFRGPKLPPGESMLVWAIHHALIDGFSASLIFERLDALVRGEDLESSPAYTLVARDVIQYQALIAPKAETFWKQQTEAYPTASSDLLLPESSGENGKGYATYTLSQKLNLSSIDEIARKARVTPAAIFFAAWALVLGLYTGSDTVLFGAVLSGRNLPFEWAQRFVGALINTLPLRMRVARTDTPVNLLQSVHRTVQALSSICAARPPADAPKVTTALVIQEDGLKDGSCEIRGLKEPYVHECVDIPLLAAVEGDKLRFLYHQGSMSGVQIEGIASAFLNSIVALTDPKIHYLKGAFARQISPPIRQRVLEAGNISSPATRMDSQVHTVPAMFYSAAARNPTNIAVDKAGSTLTYHALAEYVTIVSHVVQALVPQGEAVAVLADRSINWVIAAFAALAANTIYCPLDSTYESAYRSTLLRRSKAKLLLVPRACTEVQACGNVITLGVDQILSLNIEPSLCSQRPPGPSDTAYLCFTSGSTGQPKGVLCEHRGVVALQSSPEFRLHAQPGVRVAQFLASGFDGCIYELFGALCYGGTLVLRTHDHDSFSHLKDVDAAMINPSVAGQLNPCDYPNLKYWFLQLAFGGEPVPETIADRWASGRMLYNAYGPTEASIQSCQQLLLKGKPVTIGRPLPTTRLYILNDHLELQPPGTVGDIYVAGVQVSKGYLDQPEATARDFMLDPFATWSSNERMYRTGDLGFWDKDWNLHCCGRRDRQVKLRGYRVSLDGIATIAHQSMSQIHAAIAVIQNERIALWVEPATVCIHTLHQKLSTALPPHAVPRNIRAVEKIPLSTNGKLHAKALLETPDMDPPDSLESVPDTSVKKIIEDEWRKILGQSSSVTVRGSDEFLVHGGDSLLQLTLAARMKQVFRVPITPTDIIQSVSFDDIVALVEGKIRAKSLHDDLQGELNATASLGQKDVSSAELWWVYRYLNSQCQSGFNVPYVANLSPSVDRHRLATSLETVFNRHRILRSRFEVIDGTAQRVIADEPIVVSIVPAADVDTFVNLPFDITRGPLVRAIIAPSLLAITISHIVCDLTALKVILQETATLYGGDQLQPVEREYFDITTWNQPIEPAKAEFWTKSLEGLVLDYADKAKQSRSYRGTSVVGTVPARLYRKLVTRTIKRGSTLHQLGLTVSALVLHILSQRNHICLGSPYINRLSTEDQTVVGLCLEPLPIRIRIDAMQCTADDLIQQVRQASQSTLAHAVPWSTLLAHLGLPVQTDSSQIFDCVVTFHDDRAKTQMLPIDGISHRQIYPEGSKFAMLFEWHALPERLQLRLEYDSDHITPDIAQLVQFLSLHCAELVLNAKMKNLHIQQELKRALKQKCRELRLNIDDVRNVAREFLVSASKSKGKRS</sequence>
<keyword id="KW-0436">Ligase</keyword>
<keyword id="KW-0596">Phosphopantetheine</keyword>
<keyword id="KW-0597">Phosphoprotein</keyword>
<keyword id="KW-1185">Reference proteome</keyword>
<keyword id="KW-0677">Repeat</keyword>
<feature type="chain" id="PRO_0000458981" description="Nonribosomal peptide synthetase pboA">
    <location>
        <begin position="1"/>
        <end position="2053"/>
    </location>
</feature>
<feature type="domain" description="Carrier 1" evidence="2 6">
    <location>
        <begin position="503"/>
        <end position="579"/>
    </location>
</feature>
<feature type="domain" description="Carrier 2" evidence="2 6">
    <location>
        <begin position="1515"/>
        <end position="1593"/>
    </location>
</feature>
<feature type="region of interest" description="Adenylation 1" evidence="1 6">
    <location>
        <begin position="16"/>
        <end position="402"/>
    </location>
</feature>
<feature type="region of interest" description="Condensation 1" evidence="1 6">
    <location>
        <begin position="611"/>
        <end position="896"/>
    </location>
</feature>
<feature type="region of interest" description="Adenylation 2" evidence="1 6">
    <location>
        <begin position="1034"/>
        <end position="1418"/>
    </location>
</feature>
<feature type="region of interest" description="Condensation 2" evidence="1 6">
    <location>
        <begin position="1630"/>
        <end position="1981"/>
    </location>
</feature>
<feature type="modified residue" description="O-(pantetheine 4'-phosphoryl)serine" evidence="2">
    <location>
        <position position="540"/>
    </location>
</feature>
<feature type="modified residue" description="O-(pantetheine 4'-phosphoryl)serine" evidence="2">
    <location>
        <position position="1553"/>
    </location>
</feature>
<reference key="1">
    <citation type="journal article" date="2015" name="PLoS ONE">
        <title>A genomics based discovery of secondary metabolite biosynthetic gene clusters in Aspergillus ustus.</title>
        <authorList>
            <person name="Pi B."/>
            <person name="Yu D."/>
            <person name="Dai F."/>
            <person name="Song X."/>
            <person name="Zhu C."/>
            <person name="Li H."/>
            <person name="Yu Y."/>
        </authorList>
    </citation>
    <scope>NUCLEOTIDE SEQUENCE [LARGE SCALE GENOMIC DNA]</scope>
    <source>
        <strain>3.3904</strain>
    </source>
</reference>
<reference key="2">
    <citation type="journal article" date="2023" name="J. Nat. Prod.">
        <title>A flavin-dependent oxygenase catalyzes hydroxylation and simultaneous pyrrolidine ring formation in protubonine biosynthesis in Aspergillus ustus.</title>
        <authorList>
            <person name="Janzen D.J."/>
            <person name="Wang H."/>
            <person name="Li S.M."/>
        </authorList>
    </citation>
    <scope>FUNCTION</scope>
    <scope>CATALYTIC ACTIVITY</scope>
    <scope>PATHWAY</scope>
</reference>